<evidence type="ECO:0000255" key="1">
    <source>
        <dbReference type="HAMAP-Rule" id="MF_00154"/>
    </source>
</evidence>
<evidence type="ECO:0000305" key="2"/>
<keyword id="KW-0997">Cell inner membrane</keyword>
<keyword id="KW-1003">Cell membrane</keyword>
<keyword id="KW-0350">Heme biosynthesis</keyword>
<keyword id="KW-0472">Membrane</keyword>
<keyword id="KW-1185">Reference proteome</keyword>
<keyword id="KW-0808">Transferase</keyword>
<keyword id="KW-0812">Transmembrane</keyword>
<keyword id="KW-1133">Transmembrane helix</keyword>
<feature type="chain" id="PRO_0000326886" description="Protoheme IX farnesyltransferase">
    <location>
        <begin position="1"/>
        <end position="295"/>
    </location>
</feature>
<feature type="transmembrane region" description="Helical" evidence="1">
    <location>
        <begin position="8"/>
        <end position="28"/>
    </location>
</feature>
<feature type="transmembrane region" description="Helical" evidence="1">
    <location>
        <begin position="35"/>
        <end position="55"/>
    </location>
</feature>
<feature type="transmembrane region" description="Helical" evidence="1">
    <location>
        <begin position="83"/>
        <end position="103"/>
    </location>
</feature>
<feature type="transmembrane region" description="Helical" evidence="1">
    <location>
        <begin position="107"/>
        <end position="127"/>
    </location>
</feature>
<feature type="transmembrane region" description="Helical" evidence="1">
    <location>
        <begin position="132"/>
        <end position="152"/>
    </location>
</feature>
<feature type="transmembrane region" description="Helical" evidence="1">
    <location>
        <begin position="162"/>
        <end position="182"/>
    </location>
</feature>
<feature type="transmembrane region" description="Helical" evidence="1">
    <location>
        <begin position="208"/>
        <end position="228"/>
    </location>
</feature>
<feature type="transmembrane region" description="Helical" evidence="1">
    <location>
        <begin position="229"/>
        <end position="249"/>
    </location>
</feature>
<feature type="transmembrane region" description="Helical" evidence="1">
    <location>
        <begin position="263"/>
        <end position="283"/>
    </location>
</feature>
<accession>Q1QYZ3</accession>
<sequence length="295" mass="31851">MLKPFVSITKPGIIFGNLISVAGGFFLASQGSVDGGLFLATVIGIALVIASGCVFNNYIDRDIDRLMERTQGRVTVQGLIPPGVTLAYGGVLGVAGFSVLWFGTNALATAFALLGFVVYVGLYSLYLKRHSIYGTLVGSLSGAAPPVVGYCAVSGQFDLGALTLLLIFCLWQMPHSYAIAIFRFHDYRAASIPVLPVERGVRAAKHHIFWYILAFLGATLMLTLGGYAGYGYFAVAAAMGLYWLVMALRGYRAGDDQVWAKKVFIFSIFTITALSIMMSIDFQVTETEVLMTSLR</sequence>
<comment type="function">
    <text evidence="1">Converts heme B (protoheme IX) to heme O by substitution of the vinyl group on carbon 2 of heme B porphyrin ring with a hydroxyethyl farnesyl side group.</text>
</comment>
<comment type="catalytic activity">
    <reaction evidence="1">
        <text>heme b + (2E,6E)-farnesyl diphosphate + H2O = Fe(II)-heme o + diphosphate</text>
        <dbReference type="Rhea" id="RHEA:28070"/>
        <dbReference type="ChEBI" id="CHEBI:15377"/>
        <dbReference type="ChEBI" id="CHEBI:33019"/>
        <dbReference type="ChEBI" id="CHEBI:60344"/>
        <dbReference type="ChEBI" id="CHEBI:60530"/>
        <dbReference type="ChEBI" id="CHEBI:175763"/>
        <dbReference type="EC" id="2.5.1.141"/>
    </reaction>
</comment>
<comment type="pathway">
    <text evidence="1">Porphyrin-containing compound metabolism; heme O biosynthesis; heme O from protoheme: step 1/1.</text>
</comment>
<comment type="subcellular location">
    <subcellularLocation>
        <location evidence="1">Cell inner membrane</location>
        <topology evidence="1">Multi-pass membrane protein</topology>
    </subcellularLocation>
</comment>
<comment type="miscellaneous">
    <text evidence="1">Carbon 2 of the heme B porphyrin ring is defined according to the Fischer nomenclature.</text>
</comment>
<comment type="similarity">
    <text evidence="1">Belongs to the UbiA prenyltransferase family. Protoheme IX farnesyltransferase subfamily.</text>
</comment>
<comment type="sequence caution" evidence="2">
    <conflict type="erroneous initiation">
        <sequence resource="EMBL-CDS" id="ABE58315"/>
    </conflict>
</comment>
<gene>
    <name evidence="1" type="primary">cyoE</name>
    <name type="ordered locus">Csal_0958</name>
</gene>
<dbReference type="EC" id="2.5.1.141" evidence="1"/>
<dbReference type="EMBL" id="CP000285">
    <property type="protein sequence ID" value="ABE58315.1"/>
    <property type="status" value="ALT_INIT"/>
    <property type="molecule type" value="Genomic_DNA"/>
</dbReference>
<dbReference type="RefSeq" id="WP_043557980.1">
    <property type="nucleotide sequence ID" value="NC_007963.1"/>
</dbReference>
<dbReference type="SMR" id="Q1QYZ3"/>
<dbReference type="STRING" id="290398.Csal_0958"/>
<dbReference type="GeneID" id="95333713"/>
<dbReference type="KEGG" id="csa:Csal_0958"/>
<dbReference type="eggNOG" id="COG0109">
    <property type="taxonomic scope" value="Bacteria"/>
</dbReference>
<dbReference type="HOGENOM" id="CLU_029631_0_0_6"/>
<dbReference type="OrthoDB" id="9814417at2"/>
<dbReference type="UniPathway" id="UPA00834">
    <property type="reaction ID" value="UER00712"/>
</dbReference>
<dbReference type="Proteomes" id="UP000000239">
    <property type="component" value="Chromosome"/>
</dbReference>
<dbReference type="GO" id="GO:0005886">
    <property type="term" value="C:plasma membrane"/>
    <property type="evidence" value="ECO:0007669"/>
    <property type="project" value="UniProtKB-SubCell"/>
</dbReference>
<dbReference type="GO" id="GO:0008495">
    <property type="term" value="F:protoheme IX farnesyltransferase activity"/>
    <property type="evidence" value="ECO:0007669"/>
    <property type="project" value="UniProtKB-UniRule"/>
</dbReference>
<dbReference type="GO" id="GO:0048034">
    <property type="term" value="P:heme O biosynthetic process"/>
    <property type="evidence" value="ECO:0007669"/>
    <property type="project" value="UniProtKB-UniRule"/>
</dbReference>
<dbReference type="CDD" id="cd13957">
    <property type="entry name" value="PT_UbiA_Cox10"/>
    <property type="match status" value="1"/>
</dbReference>
<dbReference type="FunFam" id="1.10.357.140:FF:000001">
    <property type="entry name" value="Protoheme IX farnesyltransferase"/>
    <property type="match status" value="1"/>
</dbReference>
<dbReference type="Gene3D" id="1.10.357.140">
    <property type="entry name" value="UbiA prenyltransferase"/>
    <property type="match status" value="1"/>
</dbReference>
<dbReference type="HAMAP" id="MF_00154">
    <property type="entry name" value="CyoE_CtaB"/>
    <property type="match status" value="1"/>
</dbReference>
<dbReference type="InterPro" id="IPR006369">
    <property type="entry name" value="Protohaem_IX_farnesylTrfase"/>
</dbReference>
<dbReference type="InterPro" id="IPR000537">
    <property type="entry name" value="UbiA_prenyltransferase"/>
</dbReference>
<dbReference type="InterPro" id="IPR030470">
    <property type="entry name" value="UbiA_prenylTrfase_CS"/>
</dbReference>
<dbReference type="InterPro" id="IPR044878">
    <property type="entry name" value="UbiA_sf"/>
</dbReference>
<dbReference type="NCBIfam" id="TIGR01473">
    <property type="entry name" value="cyoE_ctaB"/>
    <property type="match status" value="1"/>
</dbReference>
<dbReference type="NCBIfam" id="NF003348">
    <property type="entry name" value="PRK04375.1-1"/>
    <property type="match status" value="1"/>
</dbReference>
<dbReference type="PANTHER" id="PTHR43448">
    <property type="entry name" value="PROTOHEME IX FARNESYLTRANSFERASE, MITOCHONDRIAL"/>
    <property type="match status" value="1"/>
</dbReference>
<dbReference type="PANTHER" id="PTHR43448:SF2">
    <property type="entry name" value="PROTOHEME IX FARNESYLTRANSFERASE, MITOCHONDRIAL"/>
    <property type="match status" value="1"/>
</dbReference>
<dbReference type="Pfam" id="PF01040">
    <property type="entry name" value="UbiA"/>
    <property type="match status" value="1"/>
</dbReference>
<dbReference type="PROSITE" id="PS00943">
    <property type="entry name" value="UBIA"/>
    <property type="match status" value="1"/>
</dbReference>
<protein>
    <recommendedName>
        <fullName evidence="1">Protoheme IX farnesyltransferase</fullName>
        <ecNumber evidence="1">2.5.1.141</ecNumber>
    </recommendedName>
    <alternativeName>
        <fullName evidence="1">Heme B farnesyltransferase</fullName>
    </alternativeName>
    <alternativeName>
        <fullName evidence="1">Heme O synthase</fullName>
    </alternativeName>
</protein>
<name>CYOE_CHRSD</name>
<proteinExistence type="inferred from homology"/>
<reference key="1">
    <citation type="journal article" date="2011" name="Stand. Genomic Sci.">
        <title>Complete genome sequence of the halophilic and highly halotolerant Chromohalobacter salexigens type strain (1H11(T)).</title>
        <authorList>
            <person name="Copeland A."/>
            <person name="O'Connor K."/>
            <person name="Lucas S."/>
            <person name="Lapidus A."/>
            <person name="Berry K.W."/>
            <person name="Detter J.C."/>
            <person name="Del Rio T.G."/>
            <person name="Hammon N."/>
            <person name="Dalin E."/>
            <person name="Tice H."/>
            <person name="Pitluck S."/>
            <person name="Bruce D."/>
            <person name="Goodwin L."/>
            <person name="Han C."/>
            <person name="Tapia R."/>
            <person name="Saunders E."/>
            <person name="Schmutz J."/>
            <person name="Brettin T."/>
            <person name="Larimer F."/>
            <person name="Land M."/>
            <person name="Hauser L."/>
            <person name="Vargas C."/>
            <person name="Nieto J.J."/>
            <person name="Kyrpides N.C."/>
            <person name="Ivanova N."/>
            <person name="Goker M."/>
            <person name="Klenk H.P."/>
            <person name="Csonka L.N."/>
            <person name="Woyke T."/>
        </authorList>
    </citation>
    <scope>NUCLEOTIDE SEQUENCE [LARGE SCALE GENOMIC DNA]</scope>
    <source>
        <strain>ATCC BAA-138 / DSM 3043 / CIP 106854 / NCIMB 13768 / 1H11</strain>
    </source>
</reference>
<organism>
    <name type="scientific">Chromohalobacter salexigens (strain ATCC BAA-138 / DSM 3043 / CIP 106854 / NCIMB 13768 / 1H11)</name>
    <dbReference type="NCBI Taxonomy" id="290398"/>
    <lineage>
        <taxon>Bacteria</taxon>
        <taxon>Pseudomonadati</taxon>
        <taxon>Pseudomonadota</taxon>
        <taxon>Gammaproteobacteria</taxon>
        <taxon>Oceanospirillales</taxon>
        <taxon>Halomonadaceae</taxon>
        <taxon>Chromohalobacter</taxon>
    </lineage>
</organism>